<name>Y1575_ARCFU</name>
<proteinExistence type="inferred from homology"/>
<keyword id="KW-1185">Reference proteome</keyword>
<keyword id="KW-0732">Signal</keyword>
<gene>
    <name type="ordered locus">AF_1575</name>
</gene>
<protein>
    <recommendedName>
        <fullName>Uncharacterized protein AF_1575</fullName>
    </recommendedName>
</protein>
<sequence length="210" mass="23599">MLKMNVKKALVILVALALVAAGIYLLKRPEEELRVNTDLENAKLSDFWSAVVKAANVQNETANLEWLRLKVEDGKIHLLHLEFNGNGVDGRKRVYFVDVDSTGRVRINSGTVEQSISTRHPTKVFRELDALGLYSIGGSYTLSVDFEWGDIGFDSTVTPLYLLENGELKPLREVVFHTDWPVCEIAVCKNGCEVWFIREDLSRASEVVFG</sequence>
<organism>
    <name type="scientific">Archaeoglobus fulgidus (strain ATCC 49558 / DSM 4304 / JCM 9628 / NBRC 100126 / VC-16)</name>
    <dbReference type="NCBI Taxonomy" id="224325"/>
    <lineage>
        <taxon>Archaea</taxon>
        <taxon>Methanobacteriati</taxon>
        <taxon>Methanobacteriota</taxon>
        <taxon>Archaeoglobi</taxon>
        <taxon>Archaeoglobales</taxon>
        <taxon>Archaeoglobaceae</taxon>
        <taxon>Archaeoglobus</taxon>
    </lineage>
</organism>
<feature type="signal peptide" evidence="1">
    <location>
        <begin position="1"/>
        <end position="21"/>
    </location>
</feature>
<feature type="chain" id="PRO_0000013665" description="Uncharacterized protein AF_1575">
    <location>
        <begin position="22"/>
        <end position="210"/>
    </location>
</feature>
<reference key="1">
    <citation type="journal article" date="1997" name="Nature">
        <title>The complete genome sequence of the hyperthermophilic, sulphate-reducing archaeon Archaeoglobus fulgidus.</title>
        <authorList>
            <person name="Klenk H.-P."/>
            <person name="Clayton R.A."/>
            <person name="Tomb J.-F."/>
            <person name="White O."/>
            <person name="Nelson K.E."/>
            <person name="Ketchum K.A."/>
            <person name="Dodson R.J."/>
            <person name="Gwinn M.L."/>
            <person name="Hickey E.K."/>
            <person name="Peterson J.D."/>
            <person name="Richardson D.L."/>
            <person name="Kerlavage A.R."/>
            <person name="Graham D.E."/>
            <person name="Kyrpides N.C."/>
            <person name="Fleischmann R.D."/>
            <person name="Quackenbush J."/>
            <person name="Lee N.H."/>
            <person name="Sutton G.G."/>
            <person name="Gill S.R."/>
            <person name="Kirkness E.F."/>
            <person name="Dougherty B.A."/>
            <person name="McKenney K."/>
            <person name="Adams M.D."/>
            <person name="Loftus B.J."/>
            <person name="Peterson S.N."/>
            <person name="Reich C.I."/>
            <person name="McNeil L.K."/>
            <person name="Badger J.H."/>
            <person name="Glodek A."/>
            <person name="Zhou L."/>
            <person name="Overbeek R."/>
            <person name="Gocayne J.D."/>
            <person name="Weidman J.F."/>
            <person name="McDonald L.A."/>
            <person name="Utterback T.R."/>
            <person name="Cotton M.D."/>
            <person name="Spriggs T."/>
            <person name="Artiach P."/>
            <person name="Kaine B.P."/>
            <person name="Sykes S.M."/>
            <person name="Sadow P.W."/>
            <person name="D'Andrea K.P."/>
            <person name="Bowman C."/>
            <person name="Fujii C."/>
            <person name="Garland S.A."/>
            <person name="Mason T.M."/>
            <person name="Olsen G.J."/>
            <person name="Fraser C.M."/>
            <person name="Smith H.O."/>
            <person name="Woese C.R."/>
            <person name="Venter J.C."/>
        </authorList>
    </citation>
    <scope>NUCLEOTIDE SEQUENCE [LARGE SCALE GENOMIC DNA]</scope>
    <source>
        <strain>ATCC 49558 / DSM 4304 / JCM 9628 / NBRC 100126 / VC-16</strain>
    </source>
</reference>
<accession>O28697</accession>
<dbReference type="EMBL" id="AE000782">
    <property type="protein sequence ID" value="AAB89671.1"/>
    <property type="molecule type" value="Genomic_DNA"/>
</dbReference>
<dbReference type="PIR" id="F69446">
    <property type="entry name" value="F69446"/>
</dbReference>
<dbReference type="STRING" id="224325.AF_1575"/>
<dbReference type="PaxDb" id="224325-AF_1575"/>
<dbReference type="DNASU" id="1484803"/>
<dbReference type="EnsemblBacteria" id="AAB89671">
    <property type="protein sequence ID" value="AAB89671"/>
    <property type="gene ID" value="AF_1575"/>
</dbReference>
<dbReference type="KEGG" id="afu:AF_1575"/>
<dbReference type="eggNOG" id="arCOG06136">
    <property type="taxonomic scope" value="Archaea"/>
</dbReference>
<dbReference type="HOGENOM" id="CLU_113588_0_0_2"/>
<dbReference type="Proteomes" id="UP000002199">
    <property type="component" value="Chromosome"/>
</dbReference>
<evidence type="ECO:0000255" key="1"/>